<name>DTD_LEGPH</name>
<evidence type="ECO:0000255" key="1">
    <source>
        <dbReference type="HAMAP-Rule" id="MF_00518"/>
    </source>
</evidence>
<feature type="chain" id="PRO_0000164553" description="D-aminoacyl-tRNA deacylase">
    <location>
        <begin position="1"/>
        <end position="145"/>
    </location>
</feature>
<feature type="short sequence motif" description="Gly-cisPro motif, important for rejection of L-amino acids" evidence="1">
    <location>
        <begin position="137"/>
        <end position="138"/>
    </location>
</feature>
<sequence>MLTVLQRVKEARVDIDGQTVGKINHGLLILCGFEPKDSLENIKRMLDKCINYRIFEDPSGKMNLSLKDVNGGLLLVPQFTLMADTQKGLRPSFSNAASPELGRELFDNLLTLAQKCHQNTQSGCFGANMQVYLCNDGPVTFLLQF</sequence>
<gene>
    <name evidence="1" type="primary">dtd</name>
    <name type="ordered locus">lpg1844</name>
</gene>
<dbReference type="EC" id="3.1.1.96" evidence="1"/>
<dbReference type="EMBL" id="AE017354">
    <property type="protein sequence ID" value="AAU27923.1"/>
    <property type="molecule type" value="Genomic_DNA"/>
</dbReference>
<dbReference type="RefSeq" id="WP_010947570.1">
    <property type="nucleotide sequence ID" value="NC_002942.5"/>
</dbReference>
<dbReference type="RefSeq" id="YP_095870.1">
    <property type="nucleotide sequence ID" value="NC_002942.5"/>
</dbReference>
<dbReference type="SMR" id="Q5ZUF4"/>
<dbReference type="STRING" id="272624.lpg1844"/>
<dbReference type="PaxDb" id="272624-lpg1844"/>
<dbReference type="GeneID" id="57035836"/>
<dbReference type="KEGG" id="lpn:lpg1844"/>
<dbReference type="PATRIC" id="fig|272624.6.peg.1935"/>
<dbReference type="eggNOG" id="COG1490">
    <property type="taxonomic scope" value="Bacteria"/>
</dbReference>
<dbReference type="HOGENOM" id="CLU_076901_1_0_6"/>
<dbReference type="OrthoDB" id="9801395at2"/>
<dbReference type="Proteomes" id="UP000000609">
    <property type="component" value="Chromosome"/>
</dbReference>
<dbReference type="GO" id="GO:0005737">
    <property type="term" value="C:cytoplasm"/>
    <property type="evidence" value="ECO:0007669"/>
    <property type="project" value="UniProtKB-SubCell"/>
</dbReference>
<dbReference type="GO" id="GO:0051500">
    <property type="term" value="F:D-tyrosyl-tRNA(Tyr) deacylase activity"/>
    <property type="evidence" value="ECO:0007669"/>
    <property type="project" value="TreeGrafter"/>
</dbReference>
<dbReference type="GO" id="GO:0106026">
    <property type="term" value="F:Gly-tRNA(Ala) deacylase activity"/>
    <property type="evidence" value="ECO:0007669"/>
    <property type="project" value="UniProtKB-UniRule"/>
</dbReference>
<dbReference type="GO" id="GO:0043908">
    <property type="term" value="F:Ser(Gly)-tRNA(Ala) hydrolase activity"/>
    <property type="evidence" value="ECO:0007669"/>
    <property type="project" value="UniProtKB-UniRule"/>
</dbReference>
<dbReference type="GO" id="GO:0000049">
    <property type="term" value="F:tRNA binding"/>
    <property type="evidence" value="ECO:0007669"/>
    <property type="project" value="UniProtKB-UniRule"/>
</dbReference>
<dbReference type="GO" id="GO:0019478">
    <property type="term" value="P:D-amino acid catabolic process"/>
    <property type="evidence" value="ECO:0007669"/>
    <property type="project" value="UniProtKB-UniRule"/>
</dbReference>
<dbReference type="FunFam" id="3.50.80.10:FF:000001">
    <property type="entry name" value="D-aminoacyl-tRNA deacylase"/>
    <property type="match status" value="1"/>
</dbReference>
<dbReference type="Gene3D" id="3.50.80.10">
    <property type="entry name" value="D-tyrosyl-tRNA(Tyr) deacylase"/>
    <property type="match status" value="1"/>
</dbReference>
<dbReference type="HAMAP" id="MF_00518">
    <property type="entry name" value="Deacylase_Dtd"/>
    <property type="match status" value="1"/>
</dbReference>
<dbReference type="InterPro" id="IPR003732">
    <property type="entry name" value="Daa-tRNA_deacyls_DTD"/>
</dbReference>
<dbReference type="InterPro" id="IPR023509">
    <property type="entry name" value="DTD-like_sf"/>
</dbReference>
<dbReference type="NCBIfam" id="TIGR00256">
    <property type="entry name" value="D-aminoacyl-tRNA deacylase"/>
    <property type="match status" value="1"/>
</dbReference>
<dbReference type="PANTHER" id="PTHR10472:SF5">
    <property type="entry name" value="D-AMINOACYL-TRNA DEACYLASE 1"/>
    <property type="match status" value="1"/>
</dbReference>
<dbReference type="PANTHER" id="PTHR10472">
    <property type="entry name" value="D-TYROSYL-TRNA TYR DEACYLASE"/>
    <property type="match status" value="1"/>
</dbReference>
<dbReference type="Pfam" id="PF02580">
    <property type="entry name" value="Tyr_Deacylase"/>
    <property type="match status" value="1"/>
</dbReference>
<dbReference type="SUPFAM" id="SSF69500">
    <property type="entry name" value="DTD-like"/>
    <property type="match status" value="1"/>
</dbReference>
<accession>Q5ZUF4</accession>
<organism>
    <name type="scientific">Legionella pneumophila subsp. pneumophila (strain Philadelphia 1 / ATCC 33152 / DSM 7513)</name>
    <dbReference type="NCBI Taxonomy" id="272624"/>
    <lineage>
        <taxon>Bacteria</taxon>
        <taxon>Pseudomonadati</taxon>
        <taxon>Pseudomonadota</taxon>
        <taxon>Gammaproteobacteria</taxon>
        <taxon>Legionellales</taxon>
        <taxon>Legionellaceae</taxon>
        <taxon>Legionella</taxon>
    </lineage>
</organism>
<proteinExistence type="inferred from homology"/>
<comment type="function">
    <text evidence="1">An aminoacyl-tRNA editing enzyme that deacylates mischarged D-aminoacyl-tRNAs. Also deacylates mischarged glycyl-tRNA(Ala), protecting cells against glycine mischarging by AlaRS. Acts via tRNA-based rather than protein-based catalysis; rejects L-amino acids rather than detecting D-amino acids in the active site. By recycling D-aminoacyl-tRNA to D-amino acids and free tRNA molecules, this enzyme counteracts the toxicity associated with the formation of D-aminoacyl-tRNA entities in vivo and helps enforce protein L-homochirality.</text>
</comment>
<comment type="catalytic activity">
    <reaction evidence="1">
        <text>glycyl-tRNA(Ala) + H2O = tRNA(Ala) + glycine + H(+)</text>
        <dbReference type="Rhea" id="RHEA:53744"/>
        <dbReference type="Rhea" id="RHEA-COMP:9657"/>
        <dbReference type="Rhea" id="RHEA-COMP:13640"/>
        <dbReference type="ChEBI" id="CHEBI:15377"/>
        <dbReference type="ChEBI" id="CHEBI:15378"/>
        <dbReference type="ChEBI" id="CHEBI:57305"/>
        <dbReference type="ChEBI" id="CHEBI:78442"/>
        <dbReference type="ChEBI" id="CHEBI:78522"/>
        <dbReference type="EC" id="3.1.1.96"/>
    </reaction>
</comment>
<comment type="catalytic activity">
    <reaction evidence="1">
        <text>a D-aminoacyl-tRNA + H2O = a tRNA + a D-alpha-amino acid + H(+)</text>
        <dbReference type="Rhea" id="RHEA:13953"/>
        <dbReference type="Rhea" id="RHEA-COMP:10123"/>
        <dbReference type="Rhea" id="RHEA-COMP:10124"/>
        <dbReference type="ChEBI" id="CHEBI:15377"/>
        <dbReference type="ChEBI" id="CHEBI:15378"/>
        <dbReference type="ChEBI" id="CHEBI:59871"/>
        <dbReference type="ChEBI" id="CHEBI:78442"/>
        <dbReference type="ChEBI" id="CHEBI:79333"/>
        <dbReference type="EC" id="3.1.1.96"/>
    </reaction>
</comment>
<comment type="subunit">
    <text evidence="1">Homodimer.</text>
</comment>
<comment type="subcellular location">
    <subcellularLocation>
        <location evidence="1">Cytoplasm</location>
    </subcellularLocation>
</comment>
<comment type="domain">
    <text evidence="1">A Gly-cisPro motif from one monomer fits into the active site of the other monomer to allow specific chiral rejection of L-amino acids.</text>
</comment>
<comment type="similarity">
    <text evidence="1">Belongs to the DTD family.</text>
</comment>
<reference key="1">
    <citation type="journal article" date="2004" name="Science">
        <title>The genomic sequence of the accidental pathogen Legionella pneumophila.</title>
        <authorList>
            <person name="Chien M."/>
            <person name="Morozova I."/>
            <person name="Shi S."/>
            <person name="Sheng H."/>
            <person name="Chen J."/>
            <person name="Gomez S.M."/>
            <person name="Asamani G."/>
            <person name="Hill K."/>
            <person name="Nuara J."/>
            <person name="Feder M."/>
            <person name="Rineer J."/>
            <person name="Greenberg J.J."/>
            <person name="Steshenko V."/>
            <person name="Park S.H."/>
            <person name="Zhao B."/>
            <person name="Teplitskaya E."/>
            <person name="Edwards J.R."/>
            <person name="Pampou S."/>
            <person name="Georghiou A."/>
            <person name="Chou I.-C."/>
            <person name="Iannuccilli W."/>
            <person name="Ulz M.E."/>
            <person name="Kim D.H."/>
            <person name="Geringer-Sameth A."/>
            <person name="Goldsberry C."/>
            <person name="Morozov P."/>
            <person name="Fischer S.G."/>
            <person name="Segal G."/>
            <person name="Qu X."/>
            <person name="Rzhetsky A."/>
            <person name="Zhang P."/>
            <person name="Cayanis E."/>
            <person name="De Jong P.J."/>
            <person name="Ju J."/>
            <person name="Kalachikov S."/>
            <person name="Shuman H.A."/>
            <person name="Russo J.J."/>
        </authorList>
    </citation>
    <scope>NUCLEOTIDE SEQUENCE [LARGE SCALE GENOMIC DNA]</scope>
    <source>
        <strain>Philadelphia 1 / ATCC 33152 / DSM 7513</strain>
    </source>
</reference>
<keyword id="KW-0963">Cytoplasm</keyword>
<keyword id="KW-0378">Hydrolase</keyword>
<keyword id="KW-1185">Reference proteome</keyword>
<keyword id="KW-0694">RNA-binding</keyword>
<keyword id="KW-0820">tRNA-binding</keyword>
<protein>
    <recommendedName>
        <fullName evidence="1">D-aminoacyl-tRNA deacylase</fullName>
        <shortName evidence="1">DTD</shortName>
        <ecNumber evidence="1">3.1.1.96</ecNumber>
    </recommendedName>
    <alternativeName>
        <fullName evidence="1">Gly-tRNA(Ala) deacylase</fullName>
    </alternativeName>
</protein>